<reference key="1">
    <citation type="journal article" date="2009" name="Genome Biol.">
        <title>Genomic and genetic analyses of diversity and plant interactions of Pseudomonas fluorescens.</title>
        <authorList>
            <person name="Silby M.W."/>
            <person name="Cerdeno-Tarraga A.M."/>
            <person name="Vernikos G.S."/>
            <person name="Giddens S.R."/>
            <person name="Jackson R.W."/>
            <person name="Preston G.M."/>
            <person name="Zhang X.-X."/>
            <person name="Moon C.D."/>
            <person name="Gehrig S.M."/>
            <person name="Godfrey S.A.C."/>
            <person name="Knight C.G."/>
            <person name="Malone J.G."/>
            <person name="Robinson Z."/>
            <person name="Spiers A.J."/>
            <person name="Harris S."/>
            <person name="Challis G.L."/>
            <person name="Yaxley A.M."/>
            <person name="Harris D."/>
            <person name="Seeger K."/>
            <person name="Murphy L."/>
            <person name="Rutter S."/>
            <person name="Squares R."/>
            <person name="Quail M.A."/>
            <person name="Saunders E."/>
            <person name="Mavromatis K."/>
            <person name="Brettin T.S."/>
            <person name="Bentley S.D."/>
            <person name="Hothersall J."/>
            <person name="Stephens E."/>
            <person name="Thomas C.M."/>
            <person name="Parkhill J."/>
            <person name="Levy S.B."/>
            <person name="Rainey P.B."/>
            <person name="Thomson N.R."/>
        </authorList>
    </citation>
    <scope>NUCLEOTIDE SEQUENCE [LARGE SCALE GENOMIC DNA]</scope>
    <source>
        <strain>Pf0-1</strain>
    </source>
</reference>
<proteinExistence type="inferred from homology"/>
<evidence type="ECO:0000255" key="1">
    <source>
        <dbReference type="HAMAP-Rule" id="MF_01702"/>
    </source>
</evidence>
<organism>
    <name type="scientific">Pseudomonas fluorescens (strain Pf0-1)</name>
    <dbReference type="NCBI Taxonomy" id="205922"/>
    <lineage>
        <taxon>Bacteria</taxon>
        <taxon>Pseudomonadati</taxon>
        <taxon>Pseudomonadota</taxon>
        <taxon>Gammaproteobacteria</taxon>
        <taxon>Pseudomonadales</taxon>
        <taxon>Pseudomonadaceae</taxon>
        <taxon>Pseudomonas</taxon>
    </lineage>
</organism>
<accession>Q3K4F5</accession>
<dbReference type="EC" id="7.3.2.1" evidence="1"/>
<dbReference type="EMBL" id="CP000094">
    <property type="protein sequence ID" value="ABA77349.1"/>
    <property type="molecule type" value="Genomic_DNA"/>
</dbReference>
<dbReference type="RefSeq" id="WP_011336613.1">
    <property type="nucleotide sequence ID" value="NC_007492.2"/>
</dbReference>
<dbReference type="SMR" id="Q3K4F5"/>
<dbReference type="KEGG" id="pfo:Pfl01_5612"/>
<dbReference type="eggNOG" id="COG1117">
    <property type="taxonomic scope" value="Bacteria"/>
</dbReference>
<dbReference type="HOGENOM" id="CLU_000604_1_22_6"/>
<dbReference type="Proteomes" id="UP000002704">
    <property type="component" value="Chromosome"/>
</dbReference>
<dbReference type="GO" id="GO:0005886">
    <property type="term" value="C:plasma membrane"/>
    <property type="evidence" value="ECO:0007669"/>
    <property type="project" value="UniProtKB-SubCell"/>
</dbReference>
<dbReference type="GO" id="GO:0005524">
    <property type="term" value="F:ATP binding"/>
    <property type="evidence" value="ECO:0007669"/>
    <property type="project" value="UniProtKB-KW"/>
</dbReference>
<dbReference type="GO" id="GO:0016887">
    <property type="term" value="F:ATP hydrolysis activity"/>
    <property type="evidence" value="ECO:0007669"/>
    <property type="project" value="InterPro"/>
</dbReference>
<dbReference type="GO" id="GO:0015415">
    <property type="term" value="F:ATPase-coupled phosphate ion transmembrane transporter activity"/>
    <property type="evidence" value="ECO:0007669"/>
    <property type="project" value="UniProtKB-EC"/>
</dbReference>
<dbReference type="GO" id="GO:0035435">
    <property type="term" value="P:phosphate ion transmembrane transport"/>
    <property type="evidence" value="ECO:0007669"/>
    <property type="project" value="InterPro"/>
</dbReference>
<dbReference type="CDD" id="cd03260">
    <property type="entry name" value="ABC_PstB_phosphate_transporter"/>
    <property type="match status" value="1"/>
</dbReference>
<dbReference type="FunFam" id="3.40.50.300:FF:000132">
    <property type="entry name" value="Phosphate import ATP-binding protein PstB"/>
    <property type="match status" value="1"/>
</dbReference>
<dbReference type="Gene3D" id="3.40.50.300">
    <property type="entry name" value="P-loop containing nucleotide triphosphate hydrolases"/>
    <property type="match status" value="1"/>
</dbReference>
<dbReference type="InterPro" id="IPR003593">
    <property type="entry name" value="AAA+_ATPase"/>
</dbReference>
<dbReference type="InterPro" id="IPR003439">
    <property type="entry name" value="ABC_transporter-like_ATP-bd"/>
</dbReference>
<dbReference type="InterPro" id="IPR017871">
    <property type="entry name" value="ABC_transporter-like_CS"/>
</dbReference>
<dbReference type="InterPro" id="IPR027417">
    <property type="entry name" value="P-loop_NTPase"/>
</dbReference>
<dbReference type="InterPro" id="IPR005670">
    <property type="entry name" value="PstB-like"/>
</dbReference>
<dbReference type="NCBIfam" id="TIGR00972">
    <property type="entry name" value="3a0107s01c2"/>
    <property type="match status" value="1"/>
</dbReference>
<dbReference type="PANTHER" id="PTHR43423">
    <property type="entry name" value="ABC TRANSPORTER I FAMILY MEMBER 17"/>
    <property type="match status" value="1"/>
</dbReference>
<dbReference type="PANTHER" id="PTHR43423:SF12">
    <property type="entry name" value="IRON EXPORT ATP-BINDING PROTEIN FETA-RELATED"/>
    <property type="match status" value="1"/>
</dbReference>
<dbReference type="Pfam" id="PF00005">
    <property type="entry name" value="ABC_tran"/>
    <property type="match status" value="1"/>
</dbReference>
<dbReference type="SMART" id="SM00382">
    <property type="entry name" value="AAA"/>
    <property type="match status" value="1"/>
</dbReference>
<dbReference type="SUPFAM" id="SSF52540">
    <property type="entry name" value="P-loop containing nucleoside triphosphate hydrolases"/>
    <property type="match status" value="1"/>
</dbReference>
<dbReference type="PROSITE" id="PS00211">
    <property type="entry name" value="ABC_TRANSPORTER_1"/>
    <property type="match status" value="1"/>
</dbReference>
<dbReference type="PROSITE" id="PS50893">
    <property type="entry name" value="ABC_TRANSPORTER_2"/>
    <property type="match status" value="1"/>
</dbReference>
<dbReference type="PROSITE" id="PS51238">
    <property type="entry name" value="PSTB"/>
    <property type="match status" value="1"/>
</dbReference>
<comment type="function">
    <text evidence="1">Part of the ABC transporter complex PstSACB involved in phosphate import. Responsible for energy coupling to the transport system.</text>
</comment>
<comment type="catalytic activity">
    <reaction evidence="1">
        <text>phosphate(out) + ATP + H2O = ADP + 2 phosphate(in) + H(+)</text>
        <dbReference type="Rhea" id="RHEA:24440"/>
        <dbReference type="ChEBI" id="CHEBI:15377"/>
        <dbReference type="ChEBI" id="CHEBI:15378"/>
        <dbReference type="ChEBI" id="CHEBI:30616"/>
        <dbReference type="ChEBI" id="CHEBI:43474"/>
        <dbReference type="ChEBI" id="CHEBI:456216"/>
        <dbReference type="EC" id="7.3.2.1"/>
    </reaction>
</comment>
<comment type="subunit">
    <text evidence="1">The complex is composed of two ATP-binding proteins (PstB), two transmembrane proteins (PstC and PstA) and a solute-binding protein (PstS).</text>
</comment>
<comment type="subcellular location">
    <subcellularLocation>
        <location evidence="1">Cell inner membrane</location>
        <topology evidence="1">Peripheral membrane protein</topology>
    </subcellularLocation>
</comment>
<comment type="similarity">
    <text evidence="1">Belongs to the ABC transporter superfamily. Phosphate importer (TC 3.A.1.7) family.</text>
</comment>
<protein>
    <recommendedName>
        <fullName evidence="1">Phosphate import ATP-binding protein PstB</fullName>
        <ecNumber evidence="1">7.3.2.1</ecNumber>
    </recommendedName>
    <alternativeName>
        <fullName evidence="1">ABC phosphate transporter</fullName>
    </alternativeName>
    <alternativeName>
        <fullName evidence="1">Phosphate-transporting ATPase</fullName>
    </alternativeName>
</protein>
<sequence>MQHETHTHGINMSALGRDKQSLNLERETVAIEVPGLSLFYGEKQALYDVSMNIPKQRVTAFIGPSGCGKSTLLRTFNRMNDLVDGCRVEGAINLYGNNIYRKGEDVAELRRRVGMVFQKPNPFPKTIYENVVYGLRIQGINKKRILDEAVEWALKGAALWDEVKDRLHDSALGLSGGQQQRLVIARTIAVEPEVLLLDEPCSALDPISTLKVEELIYELKSKFTIVIVTHNMQQAARVSDYTAFMYMGKLVEFGDTDTLFTNPAKKQTEDYITGRYG</sequence>
<name>PSTB_PSEPF</name>
<keyword id="KW-0067">ATP-binding</keyword>
<keyword id="KW-0997">Cell inner membrane</keyword>
<keyword id="KW-1003">Cell membrane</keyword>
<keyword id="KW-0472">Membrane</keyword>
<keyword id="KW-0547">Nucleotide-binding</keyword>
<keyword id="KW-0592">Phosphate transport</keyword>
<keyword id="KW-1278">Translocase</keyword>
<keyword id="KW-0813">Transport</keyword>
<feature type="chain" id="PRO_0000272498" description="Phosphate import ATP-binding protein PstB">
    <location>
        <begin position="1"/>
        <end position="277"/>
    </location>
</feature>
<feature type="domain" description="ABC transporter" evidence="1">
    <location>
        <begin position="31"/>
        <end position="272"/>
    </location>
</feature>
<feature type="binding site" evidence="1">
    <location>
        <begin position="63"/>
        <end position="70"/>
    </location>
    <ligand>
        <name>ATP</name>
        <dbReference type="ChEBI" id="CHEBI:30616"/>
    </ligand>
</feature>
<gene>
    <name evidence="1" type="primary">pstB</name>
    <name type="ordered locus">Pfl01_5612</name>
</gene>